<protein>
    <recommendedName>
        <fullName>Uncharacterized protein 099R</fullName>
    </recommendedName>
</protein>
<comment type="similarity">
    <text evidence="1">Belongs to the IIV-6 329R family.</text>
</comment>
<dbReference type="EMBL" id="DQ643392">
    <property type="protein sequence ID" value="ABF82129.1"/>
    <property type="molecule type" value="Genomic_DNA"/>
</dbReference>
<dbReference type="RefSeq" id="YP_654671.1">
    <property type="nucleotide sequence ID" value="NC_008187.1"/>
</dbReference>
<dbReference type="KEGG" id="vg:4156243"/>
<dbReference type="OrthoDB" id="8037at10239"/>
<dbReference type="Proteomes" id="UP000001358">
    <property type="component" value="Genome"/>
</dbReference>
<sequence length="462" mass="51163">MISYSALTTHGKSTLPSIEGWNGNHNIVKNPPSAVHTRRIIKVGTDNCLLEATHESGGRSDQVIRQFARGVNPMVSVQYSNHGTGGNGSLTTPNDYSIFTTGGHGKLPNRIMKGGAFRPPIIKKEDLLPLSRLPREQTSVFSTKCSIDQTKKITPDVVEYFKHIHQNPIHSSASSQFTFSRDSPHHVPKNIHLMVNPNGGTVGSAQSTKVWNQKGSLGQPKITESTVATDVLTVSTNAPHSYHKQQTHPIPSNIDLLVQKDLLTTSANAPHSYHKQQTHSIPFNIDLMVNSDPIRTSADAPHSYRKQQTHPVPKNIHLMVNENHPPVLNVHTNARASKDDTGEARVWPRMESPLTVAGMDYLYPLKISQQKWHHGDNPIQLVNKVPHCEVNSGGGAAMGGRPRYSQMHQMEDQKMVLSKPRPERNHSKSQIENVGTVVKLNQERIFSGAKVLNRKIQVNSNH</sequence>
<accession>Q196W1</accession>
<evidence type="ECO:0000305" key="1"/>
<gene>
    <name type="ORF">IIV3-099R</name>
</gene>
<proteinExistence type="inferred from homology"/>
<organismHost>
    <name type="scientific">Aedes vexans</name>
    <name type="common">Inland floodwater mosquito</name>
    <name type="synonym">Culex vexans</name>
    <dbReference type="NCBI Taxonomy" id="7163"/>
</organismHost>
<organismHost>
    <name type="scientific">Culex territans</name>
    <dbReference type="NCBI Taxonomy" id="42431"/>
</organismHost>
<organismHost>
    <name type="scientific">Culiseta annulata</name>
    <dbReference type="NCBI Taxonomy" id="332058"/>
</organismHost>
<organismHost>
    <name type="scientific">Ochlerotatus sollicitans</name>
    <name type="common">eastern saltmarsh mosquito</name>
    <dbReference type="NCBI Taxonomy" id="310513"/>
</organismHost>
<organismHost>
    <name type="scientific">Ochlerotatus taeniorhynchus</name>
    <name type="common">Black salt marsh mosquito</name>
    <name type="synonym">Aedes taeniorhynchus</name>
    <dbReference type="NCBI Taxonomy" id="329105"/>
</organismHost>
<organismHost>
    <name type="scientific">Psorophora ferox</name>
    <dbReference type="NCBI Taxonomy" id="7183"/>
</organismHost>
<reference key="1">
    <citation type="journal article" date="2006" name="J. Virol.">
        <title>Genome of invertebrate iridescent virus type 3 (mosquito iridescent virus).</title>
        <authorList>
            <person name="Delhon G."/>
            <person name="Tulman E.R."/>
            <person name="Afonso C.L."/>
            <person name="Lu Z."/>
            <person name="Becnel J.J."/>
            <person name="Moser B.A."/>
            <person name="Kutish G.F."/>
            <person name="Rock D.L."/>
        </authorList>
    </citation>
    <scope>NUCLEOTIDE SEQUENCE [LARGE SCALE GENOMIC DNA]</scope>
</reference>
<keyword id="KW-1185">Reference proteome</keyword>
<organism>
    <name type="scientific">Invertebrate iridescent virus 3</name>
    <name type="common">IIV-3</name>
    <name type="synonym">Mosquito iridescent virus</name>
    <dbReference type="NCBI Taxonomy" id="345201"/>
    <lineage>
        <taxon>Viruses</taxon>
        <taxon>Varidnaviria</taxon>
        <taxon>Bamfordvirae</taxon>
        <taxon>Nucleocytoviricota</taxon>
        <taxon>Megaviricetes</taxon>
        <taxon>Pimascovirales</taxon>
        <taxon>Iridoviridae</taxon>
        <taxon>Betairidovirinae</taxon>
        <taxon>Chloriridovirus</taxon>
    </lineage>
</organism>
<feature type="chain" id="PRO_0000377784" description="Uncharacterized protein 099R">
    <location>
        <begin position="1"/>
        <end position="462"/>
    </location>
</feature>
<name>VF329_IIV3</name>